<name>TMAR_ECOBW</name>
<organism>
    <name type="scientific">Escherichia coli (strain K12 / MC4100 / BW2952)</name>
    <dbReference type="NCBI Taxonomy" id="595496"/>
    <lineage>
        <taxon>Bacteria</taxon>
        <taxon>Pseudomonadati</taxon>
        <taxon>Pseudomonadota</taxon>
        <taxon>Gammaproteobacteria</taxon>
        <taxon>Enterobacterales</taxon>
        <taxon>Enterobacteriaceae</taxon>
        <taxon>Escherichia</taxon>
    </lineage>
</organism>
<reference key="1">
    <citation type="journal article" date="2009" name="J. Bacteriol.">
        <title>Genomic sequencing reveals regulatory mutations and recombinational events in the widely used MC4100 lineage of Escherichia coli K-12.</title>
        <authorList>
            <person name="Ferenci T."/>
            <person name="Zhou Z."/>
            <person name="Betteridge T."/>
            <person name="Ren Y."/>
            <person name="Liu Y."/>
            <person name="Feng L."/>
            <person name="Reeves P.R."/>
            <person name="Wang L."/>
        </authorList>
    </citation>
    <scope>NUCLEOTIDE SEQUENCE [LARGE SCALE GENOMIC DNA]</scope>
    <source>
        <strain>K12 / MC4100 / BW2952</strain>
    </source>
</reference>
<gene>
    <name evidence="1" type="primary">tmaR</name>
    <name type="ordered locus">BWG_1797</name>
</gene>
<dbReference type="EMBL" id="CP001396">
    <property type="protein sequence ID" value="ACR62331.1"/>
    <property type="molecule type" value="Genomic_DNA"/>
</dbReference>
<dbReference type="RefSeq" id="WP_000450409.1">
    <property type="nucleotide sequence ID" value="NC_012759.1"/>
</dbReference>
<dbReference type="SMR" id="C4ZQR6"/>
<dbReference type="KEGG" id="ebw:BWG_1797"/>
<dbReference type="HOGENOM" id="CLU_153146_0_0_6"/>
<dbReference type="GO" id="GO:0005829">
    <property type="term" value="C:cytosol"/>
    <property type="evidence" value="ECO:0007669"/>
    <property type="project" value="TreeGrafter"/>
</dbReference>
<dbReference type="HAMAP" id="MF_00683">
    <property type="entry name" value="Pole_loc_TmaR"/>
    <property type="match status" value="1"/>
</dbReference>
<dbReference type="InterPro" id="IPR007458">
    <property type="entry name" value="DUF496"/>
</dbReference>
<dbReference type="InterPro" id="IPR053375">
    <property type="entry name" value="UPF0265"/>
</dbReference>
<dbReference type="NCBIfam" id="NF003844">
    <property type="entry name" value="PRK05423.1"/>
    <property type="match status" value="1"/>
</dbReference>
<dbReference type="NCBIfam" id="NF040881">
    <property type="entry name" value="PTS_reg_TmaR"/>
    <property type="match status" value="1"/>
</dbReference>
<dbReference type="PANTHER" id="PTHR39591">
    <property type="entry name" value="UPF0265 PROTEIN YEEX"/>
    <property type="match status" value="1"/>
</dbReference>
<dbReference type="PANTHER" id="PTHR39591:SF1">
    <property type="entry name" value="UPF0265 PROTEIN YEEX"/>
    <property type="match status" value="1"/>
</dbReference>
<dbReference type="Pfam" id="PF04363">
    <property type="entry name" value="DUF496"/>
    <property type="match status" value="1"/>
</dbReference>
<dbReference type="PIRSF" id="PIRSF028773">
    <property type="entry name" value="UCP028773"/>
    <property type="match status" value="1"/>
</dbReference>
<feature type="chain" id="PRO_1000212545" description="Pole-localizer protein TmaR">
    <location>
        <begin position="1"/>
        <end position="109"/>
    </location>
</feature>
<feature type="coiled-coil region" evidence="1">
    <location>
        <begin position="14"/>
        <end position="41"/>
    </location>
</feature>
<accession>C4ZQR6</accession>
<proteinExistence type="inferred from homology"/>
<sequence length="109" mass="12778">METTKPSFQDVLEFVRLFRRKNKLQREIQDVEKKIRDNQKRVLLLDNLSDYIKPGMSVEAIQGIIASMKGDYEDRVDDYIIKNAELSKERRDISKKLKAMGEMKNGEAK</sequence>
<keyword id="KW-0175">Coiled coil</keyword>
<keyword id="KW-0963">Cytoplasm</keyword>
<protein>
    <recommendedName>
        <fullName evidence="1">Pole-localizer protein TmaR</fullName>
    </recommendedName>
</protein>
<evidence type="ECO:0000255" key="1">
    <source>
        <dbReference type="HAMAP-Rule" id="MF_00683"/>
    </source>
</evidence>
<comment type="function">
    <text evidence="1">Pole-localizer protein involved in the regulation of several cellular processes.</text>
</comment>
<comment type="subcellular location">
    <subcellularLocation>
        <location evidence="1">Cytoplasm</location>
    </subcellularLocation>
    <text evidence="1">Forms clusters that localize mainly near one pole of the cell.</text>
</comment>
<comment type="similarity">
    <text evidence="1">Belongs to the pole-localizer TmaR family.</text>
</comment>